<feature type="chain" id="PRO_0000350546" description="Dual-specificity RNA methyltransferase RlmN">
    <location>
        <begin position="1"/>
        <end position="398"/>
    </location>
</feature>
<feature type="domain" description="Radical SAM core" evidence="2">
    <location>
        <begin position="125"/>
        <end position="364"/>
    </location>
</feature>
<feature type="active site" description="Proton acceptor" evidence="1">
    <location>
        <position position="119"/>
    </location>
</feature>
<feature type="active site" description="S-methylcysteine intermediate" evidence="1">
    <location>
        <position position="369"/>
    </location>
</feature>
<feature type="binding site" evidence="1">
    <location>
        <position position="139"/>
    </location>
    <ligand>
        <name>[4Fe-4S] cluster</name>
        <dbReference type="ChEBI" id="CHEBI:49883"/>
        <note>4Fe-4S-S-AdoMet</note>
    </ligand>
</feature>
<feature type="binding site" evidence="1">
    <location>
        <position position="143"/>
    </location>
    <ligand>
        <name>[4Fe-4S] cluster</name>
        <dbReference type="ChEBI" id="CHEBI:49883"/>
        <note>4Fe-4S-S-AdoMet</note>
    </ligand>
</feature>
<feature type="binding site" evidence="1">
    <location>
        <position position="146"/>
    </location>
    <ligand>
        <name>[4Fe-4S] cluster</name>
        <dbReference type="ChEBI" id="CHEBI:49883"/>
        <note>4Fe-4S-S-AdoMet</note>
    </ligand>
</feature>
<feature type="binding site" evidence="1">
    <location>
        <begin position="193"/>
        <end position="194"/>
    </location>
    <ligand>
        <name>S-adenosyl-L-methionine</name>
        <dbReference type="ChEBI" id="CHEBI:59789"/>
    </ligand>
</feature>
<feature type="binding site" evidence="1">
    <location>
        <position position="225"/>
    </location>
    <ligand>
        <name>S-adenosyl-L-methionine</name>
        <dbReference type="ChEBI" id="CHEBI:59789"/>
    </ligand>
</feature>
<feature type="binding site" evidence="1">
    <location>
        <begin position="247"/>
        <end position="249"/>
    </location>
    <ligand>
        <name>S-adenosyl-L-methionine</name>
        <dbReference type="ChEBI" id="CHEBI:59789"/>
    </ligand>
</feature>
<feature type="binding site" evidence="1">
    <location>
        <position position="326"/>
    </location>
    <ligand>
        <name>S-adenosyl-L-methionine</name>
        <dbReference type="ChEBI" id="CHEBI:59789"/>
    </ligand>
</feature>
<feature type="disulfide bond" description="(transient)" evidence="1">
    <location>
        <begin position="132"/>
        <end position="369"/>
    </location>
</feature>
<proteinExistence type="inferred from homology"/>
<comment type="function">
    <text evidence="1">Specifically methylates position 2 of adenine 2503 in 23S rRNA and position 2 of adenine 37 in tRNAs. m2A2503 modification seems to play a crucial role in the proofreading step occurring at the peptidyl transferase center and thus would serve to optimize ribosomal fidelity.</text>
</comment>
<comment type="catalytic activity">
    <reaction evidence="1">
        <text>adenosine(2503) in 23S rRNA + 2 reduced [2Fe-2S]-[ferredoxin] + 2 S-adenosyl-L-methionine = 2-methyladenosine(2503) in 23S rRNA + 5'-deoxyadenosine + L-methionine + 2 oxidized [2Fe-2S]-[ferredoxin] + S-adenosyl-L-homocysteine</text>
        <dbReference type="Rhea" id="RHEA:42916"/>
        <dbReference type="Rhea" id="RHEA-COMP:10000"/>
        <dbReference type="Rhea" id="RHEA-COMP:10001"/>
        <dbReference type="Rhea" id="RHEA-COMP:10152"/>
        <dbReference type="Rhea" id="RHEA-COMP:10282"/>
        <dbReference type="ChEBI" id="CHEBI:17319"/>
        <dbReference type="ChEBI" id="CHEBI:33737"/>
        <dbReference type="ChEBI" id="CHEBI:33738"/>
        <dbReference type="ChEBI" id="CHEBI:57844"/>
        <dbReference type="ChEBI" id="CHEBI:57856"/>
        <dbReference type="ChEBI" id="CHEBI:59789"/>
        <dbReference type="ChEBI" id="CHEBI:74411"/>
        <dbReference type="ChEBI" id="CHEBI:74497"/>
        <dbReference type="EC" id="2.1.1.192"/>
    </reaction>
</comment>
<comment type="catalytic activity">
    <reaction evidence="1">
        <text>adenosine(37) in tRNA + 2 reduced [2Fe-2S]-[ferredoxin] + 2 S-adenosyl-L-methionine = 2-methyladenosine(37) in tRNA + 5'-deoxyadenosine + L-methionine + 2 oxidized [2Fe-2S]-[ferredoxin] + S-adenosyl-L-homocysteine</text>
        <dbReference type="Rhea" id="RHEA:43332"/>
        <dbReference type="Rhea" id="RHEA-COMP:10000"/>
        <dbReference type="Rhea" id="RHEA-COMP:10001"/>
        <dbReference type="Rhea" id="RHEA-COMP:10162"/>
        <dbReference type="Rhea" id="RHEA-COMP:10485"/>
        <dbReference type="ChEBI" id="CHEBI:17319"/>
        <dbReference type="ChEBI" id="CHEBI:33737"/>
        <dbReference type="ChEBI" id="CHEBI:33738"/>
        <dbReference type="ChEBI" id="CHEBI:57844"/>
        <dbReference type="ChEBI" id="CHEBI:57856"/>
        <dbReference type="ChEBI" id="CHEBI:59789"/>
        <dbReference type="ChEBI" id="CHEBI:74411"/>
        <dbReference type="ChEBI" id="CHEBI:74497"/>
        <dbReference type="EC" id="2.1.1.192"/>
    </reaction>
</comment>
<comment type="cofactor">
    <cofactor evidence="1">
        <name>[4Fe-4S] cluster</name>
        <dbReference type="ChEBI" id="CHEBI:49883"/>
    </cofactor>
    <text evidence="1">Binds 1 [4Fe-4S] cluster. The cluster is coordinated with 3 cysteines and an exchangeable S-adenosyl-L-methionine.</text>
</comment>
<comment type="subcellular location">
    <subcellularLocation>
        <location evidence="1">Cytoplasm</location>
    </subcellularLocation>
</comment>
<comment type="miscellaneous">
    <text evidence="1">Reaction proceeds by a ping-pong mechanism involving intermediate methylation of a conserved cysteine residue.</text>
</comment>
<comment type="similarity">
    <text evidence="1">Belongs to the radical SAM superfamily. RlmN family.</text>
</comment>
<sequence length="398" mass="44295">MSEQLLTASTSIDAAPLSDNTVQTTAPATSKINLLDLNRQQMREFFAEMGEKPFRADQVMKWMYHYCYDDFEQMTDINKGLRAKLQRVAEIRAPEVAEEQRSVDGTIKWAIKVGDQQVETVYIPEADRATLCVSSQVGCALECKFCSTAQQGFNRNLRVSEIIGQVWRAAKIIGSLKSTGTRPITNVVMMGMGEPLLNLNNVVPAMDIMMDDFGFGLSKRRVTLSTSGVVPALDKLGDMIDVALAISLHAPTDDIRDEIVPINRKYNIETFLAAVRRYLDKSKANGGRVTVEYVMLDHINDSTEQAHQLAECLKDTPCKINLIPWNPFPGAPYGRSSNSRVDRFSKVLMEYGFTTIVRKTRGDDIDAACGQLAGEVIDRTKRTLKKKMAGEPIAIKTV</sequence>
<evidence type="ECO:0000255" key="1">
    <source>
        <dbReference type="HAMAP-Rule" id="MF_01849"/>
    </source>
</evidence>
<evidence type="ECO:0000255" key="2">
    <source>
        <dbReference type="PROSITE-ProRule" id="PRU01266"/>
    </source>
</evidence>
<organism>
    <name type="scientific">Yersinia pseudotuberculosis serotype O:3 (strain YPIII)</name>
    <dbReference type="NCBI Taxonomy" id="502800"/>
    <lineage>
        <taxon>Bacteria</taxon>
        <taxon>Pseudomonadati</taxon>
        <taxon>Pseudomonadota</taxon>
        <taxon>Gammaproteobacteria</taxon>
        <taxon>Enterobacterales</taxon>
        <taxon>Yersiniaceae</taxon>
        <taxon>Yersinia</taxon>
    </lineage>
</organism>
<name>RLMN_YERPY</name>
<dbReference type="EC" id="2.1.1.192" evidence="1"/>
<dbReference type="EMBL" id="CP000950">
    <property type="protein sequence ID" value="ACA67588.1"/>
    <property type="molecule type" value="Genomic_DNA"/>
</dbReference>
<dbReference type="RefSeq" id="WP_012104806.1">
    <property type="nucleotide sequence ID" value="NZ_CP009792.1"/>
</dbReference>
<dbReference type="SMR" id="B1JS02"/>
<dbReference type="KEGG" id="ypy:YPK_1290"/>
<dbReference type="PATRIC" id="fig|502800.11.peg.1925"/>
<dbReference type="GO" id="GO:0005737">
    <property type="term" value="C:cytoplasm"/>
    <property type="evidence" value="ECO:0007669"/>
    <property type="project" value="UniProtKB-SubCell"/>
</dbReference>
<dbReference type="GO" id="GO:0051539">
    <property type="term" value="F:4 iron, 4 sulfur cluster binding"/>
    <property type="evidence" value="ECO:0007669"/>
    <property type="project" value="UniProtKB-UniRule"/>
</dbReference>
<dbReference type="GO" id="GO:0046872">
    <property type="term" value="F:metal ion binding"/>
    <property type="evidence" value="ECO:0007669"/>
    <property type="project" value="UniProtKB-KW"/>
</dbReference>
<dbReference type="GO" id="GO:0070040">
    <property type="term" value="F:rRNA (adenine(2503)-C2-)-methyltransferase activity"/>
    <property type="evidence" value="ECO:0007669"/>
    <property type="project" value="UniProtKB-UniRule"/>
</dbReference>
<dbReference type="GO" id="GO:0019843">
    <property type="term" value="F:rRNA binding"/>
    <property type="evidence" value="ECO:0007669"/>
    <property type="project" value="UniProtKB-UniRule"/>
</dbReference>
<dbReference type="GO" id="GO:0002935">
    <property type="term" value="F:tRNA (adenine(37)-C2)-methyltransferase activity"/>
    <property type="evidence" value="ECO:0007669"/>
    <property type="project" value="UniProtKB-UniRule"/>
</dbReference>
<dbReference type="GO" id="GO:0000049">
    <property type="term" value="F:tRNA binding"/>
    <property type="evidence" value="ECO:0007669"/>
    <property type="project" value="UniProtKB-UniRule"/>
</dbReference>
<dbReference type="GO" id="GO:0070475">
    <property type="term" value="P:rRNA base methylation"/>
    <property type="evidence" value="ECO:0007669"/>
    <property type="project" value="UniProtKB-UniRule"/>
</dbReference>
<dbReference type="GO" id="GO:0030488">
    <property type="term" value="P:tRNA methylation"/>
    <property type="evidence" value="ECO:0007669"/>
    <property type="project" value="UniProtKB-UniRule"/>
</dbReference>
<dbReference type="CDD" id="cd01335">
    <property type="entry name" value="Radical_SAM"/>
    <property type="match status" value="1"/>
</dbReference>
<dbReference type="FunFam" id="1.10.150.530:FF:000001">
    <property type="entry name" value="Dual-specificity RNA methyltransferase RlmN"/>
    <property type="match status" value="1"/>
</dbReference>
<dbReference type="FunFam" id="3.20.20.70:FF:000008">
    <property type="entry name" value="Dual-specificity RNA methyltransferase RlmN"/>
    <property type="match status" value="1"/>
</dbReference>
<dbReference type="Gene3D" id="1.10.150.530">
    <property type="match status" value="1"/>
</dbReference>
<dbReference type="Gene3D" id="3.20.20.70">
    <property type="entry name" value="Aldolase class I"/>
    <property type="match status" value="1"/>
</dbReference>
<dbReference type="HAMAP" id="MF_01849">
    <property type="entry name" value="RNA_methyltr_RlmN"/>
    <property type="match status" value="1"/>
</dbReference>
<dbReference type="InterPro" id="IPR013785">
    <property type="entry name" value="Aldolase_TIM"/>
</dbReference>
<dbReference type="InterPro" id="IPR040072">
    <property type="entry name" value="Methyltransferase_A"/>
</dbReference>
<dbReference type="InterPro" id="IPR048641">
    <property type="entry name" value="RlmN_N"/>
</dbReference>
<dbReference type="InterPro" id="IPR027492">
    <property type="entry name" value="RNA_MTrfase_RlmN"/>
</dbReference>
<dbReference type="InterPro" id="IPR004383">
    <property type="entry name" value="rRNA_lsu_MTrfase_RlmN/Cfr"/>
</dbReference>
<dbReference type="InterPro" id="IPR007197">
    <property type="entry name" value="rSAM"/>
</dbReference>
<dbReference type="NCBIfam" id="NF008396">
    <property type="entry name" value="PRK11194.1"/>
    <property type="match status" value="1"/>
</dbReference>
<dbReference type="NCBIfam" id="TIGR00048">
    <property type="entry name" value="rRNA_mod_RlmN"/>
    <property type="match status" value="1"/>
</dbReference>
<dbReference type="PANTHER" id="PTHR30544">
    <property type="entry name" value="23S RRNA METHYLTRANSFERASE"/>
    <property type="match status" value="1"/>
</dbReference>
<dbReference type="PANTHER" id="PTHR30544:SF5">
    <property type="entry name" value="RADICAL SAM CORE DOMAIN-CONTAINING PROTEIN"/>
    <property type="match status" value="1"/>
</dbReference>
<dbReference type="Pfam" id="PF04055">
    <property type="entry name" value="Radical_SAM"/>
    <property type="match status" value="1"/>
</dbReference>
<dbReference type="Pfam" id="PF21016">
    <property type="entry name" value="RlmN_N"/>
    <property type="match status" value="1"/>
</dbReference>
<dbReference type="PIRSF" id="PIRSF006004">
    <property type="entry name" value="CHP00048"/>
    <property type="match status" value="1"/>
</dbReference>
<dbReference type="SFLD" id="SFLDF00275">
    <property type="entry name" value="adenosine_C2_methyltransferase"/>
    <property type="match status" value="1"/>
</dbReference>
<dbReference type="SFLD" id="SFLDS00029">
    <property type="entry name" value="Radical_SAM"/>
    <property type="match status" value="1"/>
</dbReference>
<dbReference type="SUPFAM" id="SSF102114">
    <property type="entry name" value="Radical SAM enzymes"/>
    <property type="match status" value="1"/>
</dbReference>
<dbReference type="PROSITE" id="PS51918">
    <property type="entry name" value="RADICAL_SAM"/>
    <property type="match status" value="1"/>
</dbReference>
<keyword id="KW-0004">4Fe-4S</keyword>
<keyword id="KW-0963">Cytoplasm</keyword>
<keyword id="KW-1015">Disulfide bond</keyword>
<keyword id="KW-0408">Iron</keyword>
<keyword id="KW-0411">Iron-sulfur</keyword>
<keyword id="KW-0479">Metal-binding</keyword>
<keyword id="KW-0489">Methyltransferase</keyword>
<keyword id="KW-0698">rRNA processing</keyword>
<keyword id="KW-0949">S-adenosyl-L-methionine</keyword>
<keyword id="KW-0808">Transferase</keyword>
<keyword id="KW-0819">tRNA processing</keyword>
<accession>B1JS02</accession>
<protein>
    <recommendedName>
        <fullName evidence="1">Dual-specificity RNA methyltransferase RlmN</fullName>
        <ecNumber evidence="1">2.1.1.192</ecNumber>
    </recommendedName>
    <alternativeName>
        <fullName evidence="1">23S rRNA (adenine(2503)-C(2))-methyltransferase</fullName>
    </alternativeName>
    <alternativeName>
        <fullName evidence="1">23S rRNA m2A2503 methyltransferase</fullName>
    </alternativeName>
    <alternativeName>
        <fullName evidence="1">Ribosomal RNA large subunit methyltransferase N</fullName>
    </alternativeName>
    <alternativeName>
        <fullName evidence="1">tRNA (adenine(37)-C(2))-methyltransferase</fullName>
    </alternativeName>
    <alternativeName>
        <fullName evidence="1">tRNA m2A37 methyltransferase</fullName>
    </alternativeName>
</protein>
<reference key="1">
    <citation type="submission" date="2008-02" db="EMBL/GenBank/DDBJ databases">
        <title>Complete sequence of Yersinia pseudotuberculosis YPIII.</title>
        <authorList>
            <consortium name="US DOE Joint Genome Institute"/>
            <person name="Copeland A."/>
            <person name="Lucas S."/>
            <person name="Lapidus A."/>
            <person name="Glavina del Rio T."/>
            <person name="Dalin E."/>
            <person name="Tice H."/>
            <person name="Bruce D."/>
            <person name="Goodwin L."/>
            <person name="Pitluck S."/>
            <person name="Munk A.C."/>
            <person name="Brettin T."/>
            <person name="Detter J.C."/>
            <person name="Han C."/>
            <person name="Tapia R."/>
            <person name="Schmutz J."/>
            <person name="Larimer F."/>
            <person name="Land M."/>
            <person name="Hauser L."/>
            <person name="Challacombe J.F."/>
            <person name="Green L."/>
            <person name="Lindler L.E."/>
            <person name="Nikolich M.P."/>
            <person name="Richardson P."/>
        </authorList>
    </citation>
    <scope>NUCLEOTIDE SEQUENCE [LARGE SCALE GENOMIC DNA]</scope>
    <source>
        <strain>YPIII</strain>
    </source>
</reference>
<gene>
    <name evidence="1" type="primary">rlmN</name>
    <name type="ordered locus">YPK_1290</name>
</gene>